<protein>
    <recommendedName>
        <fullName evidence="1">Phosphoribosylformylglycinamidine synthase subunit PurL</fullName>
        <shortName evidence="1">FGAM synthase</shortName>
        <ecNumber evidence="1">6.3.5.3</ecNumber>
    </recommendedName>
    <alternativeName>
        <fullName evidence="1">Formylglycinamide ribonucleotide amidotransferase subunit II</fullName>
        <shortName evidence="1">FGAR amidotransferase II</shortName>
        <shortName evidence="1">FGAR-AT II</shortName>
    </alternativeName>
    <alternativeName>
        <fullName evidence="1">Glutamine amidotransferase PurL</fullName>
    </alternativeName>
    <alternativeName>
        <fullName evidence="1">Phosphoribosylformylglycinamidine synthase subunit II</fullName>
    </alternativeName>
</protein>
<organism>
    <name type="scientific">Metallosphaera sedula (strain ATCC 51363 / DSM 5348 / JCM 9185 / NBRC 15509 / TH2)</name>
    <dbReference type="NCBI Taxonomy" id="399549"/>
    <lineage>
        <taxon>Archaea</taxon>
        <taxon>Thermoproteota</taxon>
        <taxon>Thermoprotei</taxon>
        <taxon>Sulfolobales</taxon>
        <taxon>Sulfolobaceae</taxon>
        <taxon>Metallosphaera</taxon>
    </lineage>
</organism>
<gene>
    <name evidence="1" type="primary">purL</name>
    <name type="ordered locus">Msed_1980</name>
</gene>
<sequence>MILTLSKTEMEVVRRVLGREPKEAEWKLVDALWSEHCSYKSSKVFLRSLPSTGPNVIMSVEDWQDAGAVDVGDGLALVLKVESHNHPSAIDPFNGAATGVGGILRDIISKGAKPIALLDMIRVGKLDDKGKWLLKNIISGIGFYGNSVGVPVVGGELSFDETYNDNPLVDVACAGIVSKDSIVPSVVREPGLRLVLAGFTGLDGLGGASFASRKLSGMDEIGAVQIADPFAGKIIIDVTLEIAKEVEAIKDLGGGGLAVAVTEMANGLGAVVNLERVPLRFEYLSPEDIIISETQERMLFAVKPEKVESVCAKFREYNYPCEDIGEITAEPKVRFLYNGEPVAELPSDLLLSPPLNVWPAERKPRKREPEREVALGEALRAVLTHPDLVSKEWAYSQFDYEVGTSTVVKPGQGDSAVVELPNGKYLALKGDANQDLCAEDAYECGKAIVAEAYRNLATVGARGIALVDHLQFGDPRKPHVYQDFIDAVRGISEASKFFSIPVVGGKVSFHNEDKNGNPIKPTPLVVMAGLVEGKLARNRVEEGDLVLIGETRNELAGTLFSRIFGGGGEVAKTRLMEDLIASNLVIKGINEGKITWNKDVSKGGLAGALLPILAKGFSVRISSSQVIGTSNLLGKMFSESGGRFLVLTSDPQWFMYQAGRMGIQALAIGKVTKDGSKLVLDYETFPMDSIVENYYSFLEGSL</sequence>
<proteinExistence type="inferred from homology"/>
<keyword id="KW-0067">ATP-binding</keyword>
<keyword id="KW-0963">Cytoplasm</keyword>
<keyword id="KW-0436">Ligase</keyword>
<keyword id="KW-0460">Magnesium</keyword>
<keyword id="KW-0479">Metal-binding</keyword>
<keyword id="KW-0547">Nucleotide-binding</keyword>
<keyword id="KW-0658">Purine biosynthesis</keyword>
<keyword id="KW-1185">Reference proteome</keyword>
<feature type="chain" id="PRO_1000072299" description="Phosphoribosylformylglycinamidine synthase subunit PurL">
    <location>
        <begin position="1"/>
        <end position="702"/>
    </location>
</feature>
<feature type="active site" evidence="1">
    <location>
        <position position="36"/>
    </location>
</feature>
<feature type="active site" description="Proton acceptor" evidence="1">
    <location>
        <position position="84"/>
    </location>
</feature>
<feature type="binding site" evidence="1">
    <location>
        <position position="39"/>
    </location>
    <ligand>
        <name>ATP</name>
        <dbReference type="ChEBI" id="CHEBI:30616"/>
    </ligand>
</feature>
<feature type="binding site" evidence="1">
    <location>
        <position position="80"/>
    </location>
    <ligand>
        <name>ATP</name>
        <dbReference type="ChEBI" id="CHEBI:30616"/>
    </ligand>
</feature>
<feature type="binding site" evidence="1">
    <location>
        <position position="82"/>
    </location>
    <ligand>
        <name>Mg(2+)</name>
        <dbReference type="ChEBI" id="CHEBI:18420"/>
        <label>1</label>
    </ligand>
</feature>
<feature type="binding site" evidence="1">
    <location>
        <begin position="83"/>
        <end position="86"/>
    </location>
    <ligand>
        <name>substrate</name>
    </ligand>
</feature>
<feature type="binding site" evidence="1">
    <location>
        <position position="105"/>
    </location>
    <ligand>
        <name>substrate</name>
    </ligand>
</feature>
<feature type="binding site" evidence="1">
    <location>
        <position position="106"/>
    </location>
    <ligand>
        <name>Mg(2+)</name>
        <dbReference type="ChEBI" id="CHEBI:18420"/>
        <label>2</label>
    </ligand>
</feature>
<feature type="binding site" evidence="1">
    <location>
        <position position="225"/>
    </location>
    <ligand>
        <name>substrate</name>
    </ligand>
</feature>
<feature type="binding site" evidence="1">
    <location>
        <position position="251"/>
    </location>
    <ligand>
        <name>Mg(2+)</name>
        <dbReference type="ChEBI" id="CHEBI:18420"/>
        <label>2</label>
    </ligand>
</feature>
<feature type="binding site" evidence="1">
    <location>
        <begin position="293"/>
        <end position="295"/>
    </location>
    <ligand>
        <name>substrate</name>
    </ligand>
</feature>
<feature type="binding site" evidence="1">
    <location>
        <position position="468"/>
    </location>
    <ligand>
        <name>ATP</name>
        <dbReference type="ChEBI" id="CHEBI:30616"/>
    </ligand>
</feature>
<feature type="binding site" evidence="1">
    <location>
        <position position="505"/>
    </location>
    <ligand>
        <name>ATP</name>
        <dbReference type="ChEBI" id="CHEBI:30616"/>
    </ligand>
</feature>
<feature type="binding site" evidence="1">
    <location>
        <position position="508"/>
    </location>
    <ligand>
        <name>substrate</name>
    </ligand>
</feature>
<name>PURL_METS5</name>
<evidence type="ECO:0000255" key="1">
    <source>
        <dbReference type="HAMAP-Rule" id="MF_00420"/>
    </source>
</evidence>
<accession>A4YI68</accession>
<comment type="function">
    <text evidence="1">Part of the phosphoribosylformylglycinamidine synthase complex involved in the purines biosynthetic pathway. Catalyzes the ATP-dependent conversion of formylglycinamide ribonucleotide (FGAR) and glutamine to yield formylglycinamidine ribonucleotide (FGAM) and glutamate. The FGAM synthase complex is composed of three subunits. PurQ produces an ammonia molecule by converting glutamine to glutamate. PurL transfers the ammonia molecule to FGAR to form FGAM in an ATP-dependent manner. PurS interacts with PurQ and PurL and is thought to assist in the transfer of the ammonia molecule from PurQ to PurL.</text>
</comment>
<comment type="catalytic activity">
    <reaction evidence="1">
        <text>N(2)-formyl-N(1)-(5-phospho-beta-D-ribosyl)glycinamide + L-glutamine + ATP + H2O = 2-formamido-N(1)-(5-O-phospho-beta-D-ribosyl)acetamidine + L-glutamate + ADP + phosphate + H(+)</text>
        <dbReference type="Rhea" id="RHEA:17129"/>
        <dbReference type="ChEBI" id="CHEBI:15377"/>
        <dbReference type="ChEBI" id="CHEBI:15378"/>
        <dbReference type="ChEBI" id="CHEBI:29985"/>
        <dbReference type="ChEBI" id="CHEBI:30616"/>
        <dbReference type="ChEBI" id="CHEBI:43474"/>
        <dbReference type="ChEBI" id="CHEBI:58359"/>
        <dbReference type="ChEBI" id="CHEBI:147286"/>
        <dbReference type="ChEBI" id="CHEBI:147287"/>
        <dbReference type="ChEBI" id="CHEBI:456216"/>
        <dbReference type="EC" id="6.3.5.3"/>
    </reaction>
</comment>
<comment type="pathway">
    <text evidence="1">Purine metabolism; IMP biosynthesis via de novo pathway; 5-amino-1-(5-phospho-D-ribosyl)imidazole from N(2)-formyl-N(1)-(5-phospho-D-ribosyl)glycinamide: step 1/2.</text>
</comment>
<comment type="subunit">
    <text evidence="1">Monomer. Part of the FGAM synthase complex composed of 1 PurL, 1 PurQ and 2 PurS subunits.</text>
</comment>
<comment type="subcellular location">
    <subcellularLocation>
        <location evidence="1">Cytoplasm</location>
    </subcellularLocation>
</comment>
<comment type="similarity">
    <text evidence="1">Belongs to the FGAMS family.</text>
</comment>
<dbReference type="EC" id="6.3.5.3" evidence="1"/>
<dbReference type="EMBL" id="CP000682">
    <property type="protein sequence ID" value="ABP96120.1"/>
    <property type="molecule type" value="Genomic_DNA"/>
</dbReference>
<dbReference type="RefSeq" id="WP_012021907.1">
    <property type="nucleotide sequence ID" value="NC_009440.1"/>
</dbReference>
<dbReference type="SMR" id="A4YI68"/>
<dbReference type="STRING" id="399549.Msed_1980"/>
<dbReference type="GeneID" id="91756512"/>
<dbReference type="KEGG" id="mse:Msed_1980"/>
<dbReference type="eggNOG" id="arCOG00641">
    <property type="taxonomic scope" value="Archaea"/>
</dbReference>
<dbReference type="HOGENOM" id="CLU_003100_0_1_2"/>
<dbReference type="UniPathway" id="UPA00074">
    <property type="reaction ID" value="UER00128"/>
</dbReference>
<dbReference type="Proteomes" id="UP000000242">
    <property type="component" value="Chromosome"/>
</dbReference>
<dbReference type="GO" id="GO:0005737">
    <property type="term" value="C:cytoplasm"/>
    <property type="evidence" value="ECO:0007669"/>
    <property type="project" value="UniProtKB-SubCell"/>
</dbReference>
<dbReference type="GO" id="GO:0005524">
    <property type="term" value="F:ATP binding"/>
    <property type="evidence" value="ECO:0007669"/>
    <property type="project" value="UniProtKB-UniRule"/>
</dbReference>
<dbReference type="GO" id="GO:0000287">
    <property type="term" value="F:magnesium ion binding"/>
    <property type="evidence" value="ECO:0007669"/>
    <property type="project" value="UniProtKB-UniRule"/>
</dbReference>
<dbReference type="GO" id="GO:0004642">
    <property type="term" value="F:phosphoribosylformylglycinamidine synthase activity"/>
    <property type="evidence" value="ECO:0007669"/>
    <property type="project" value="UniProtKB-UniRule"/>
</dbReference>
<dbReference type="GO" id="GO:0006189">
    <property type="term" value="P:'de novo' IMP biosynthetic process"/>
    <property type="evidence" value="ECO:0007669"/>
    <property type="project" value="UniProtKB-UniRule"/>
</dbReference>
<dbReference type="CDD" id="cd02203">
    <property type="entry name" value="PurL_repeat1"/>
    <property type="match status" value="1"/>
</dbReference>
<dbReference type="CDD" id="cd02204">
    <property type="entry name" value="PurL_repeat2"/>
    <property type="match status" value="1"/>
</dbReference>
<dbReference type="Gene3D" id="3.90.650.10">
    <property type="entry name" value="PurM-like C-terminal domain"/>
    <property type="match status" value="2"/>
</dbReference>
<dbReference type="Gene3D" id="3.30.1330.10">
    <property type="entry name" value="PurM-like, N-terminal domain"/>
    <property type="match status" value="2"/>
</dbReference>
<dbReference type="HAMAP" id="MF_00420">
    <property type="entry name" value="PurL_2"/>
    <property type="match status" value="1"/>
</dbReference>
<dbReference type="InterPro" id="IPR010074">
    <property type="entry name" value="PRibForGlyAmidine_synth_PurL"/>
</dbReference>
<dbReference type="InterPro" id="IPR041609">
    <property type="entry name" value="PurL_linker"/>
</dbReference>
<dbReference type="InterPro" id="IPR010918">
    <property type="entry name" value="PurM-like_C_dom"/>
</dbReference>
<dbReference type="InterPro" id="IPR036676">
    <property type="entry name" value="PurM-like_C_sf"/>
</dbReference>
<dbReference type="InterPro" id="IPR016188">
    <property type="entry name" value="PurM-like_N"/>
</dbReference>
<dbReference type="InterPro" id="IPR036921">
    <property type="entry name" value="PurM-like_N_sf"/>
</dbReference>
<dbReference type="NCBIfam" id="TIGR01736">
    <property type="entry name" value="FGAM_synth_II"/>
    <property type="match status" value="1"/>
</dbReference>
<dbReference type="NCBIfam" id="NF002290">
    <property type="entry name" value="PRK01213.1"/>
    <property type="match status" value="1"/>
</dbReference>
<dbReference type="PANTHER" id="PTHR43555">
    <property type="entry name" value="PHOSPHORIBOSYLFORMYLGLYCINAMIDINE SYNTHASE SUBUNIT PURL"/>
    <property type="match status" value="1"/>
</dbReference>
<dbReference type="PANTHER" id="PTHR43555:SF1">
    <property type="entry name" value="PHOSPHORIBOSYLFORMYLGLYCINAMIDINE SYNTHASE SUBUNIT PURL"/>
    <property type="match status" value="1"/>
</dbReference>
<dbReference type="Pfam" id="PF00586">
    <property type="entry name" value="AIRS"/>
    <property type="match status" value="2"/>
</dbReference>
<dbReference type="Pfam" id="PF02769">
    <property type="entry name" value="AIRS_C"/>
    <property type="match status" value="2"/>
</dbReference>
<dbReference type="Pfam" id="PF18072">
    <property type="entry name" value="FGAR-AT_linker"/>
    <property type="match status" value="1"/>
</dbReference>
<dbReference type="PIRSF" id="PIRSF001587">
    <property type="entry name" value="FGAM_synthase_II"/>
    <property type="match status" value="1"/>
</dbReference>
<dbReference type="SUPFAM" id="SSF56042">
    <property type="entry name" value="PurM C-terminal domain-like"/>
    <property type="match status" value="2"/>
</dbReference>
<dbReference type="SUPFAM" id="SSF55326">
    <property type="entry name" value="PurM N-terminal domain-like"/>
    <property type="match status" value="2"/>
</dbReference>
<reference key="1">
    <citation type="journal article" date="2008" name="Appl. Environ. Microbiol.">
        <title>The genome sequence of the metal-mobilizing, extremely thermoacidophilic archaeon Metallosphaera sedula provides insights into bioleaching-associated metabolism.</title>
        <authorList>
            <person name="Auernik K.S."/>
            <person name="Maezato Y."/>
            <person name="Blum P.H."/>
            <person name="Kelly R.M."/>
        </authorList>
    </citation>
    <scope>NUCLEOTIDE SEQUENCE [LARGE SCALE GENOMIC DNA]</scope>
    <source>
        <strain>ATCC 51363 / DSM 5348 / JCM 9185 / NBRC 15509 / TH2</strain>
    </source>
</reference>